<evidence type="ECO:0000250" key="1">
    <source>
        <dbReference type="UniProtKB" id="P77257"/>
    </source>
</evidence>
<evidence type="ECO:0000255" key="2">
    <source>
        <dbReference type="PROSITE-ProRule" id="PRU00434"/>
    </source>
</evidence>
<evidence type="ECO:0000305" key="3"/>
<reference key="1">
    <citation type="journal article" date="2008" name="J. Bacteriol.">
        <title>The complete genome sequence of Escherichia coli DH10B: insights into the biology of a laboratory workhorse.</title>
        <authorList>
            <person name="Durfee T."/>
            <person name="Nelson R."/>
            <person name="Baldwin S."/>
            <person name="Plunkett G. III"/>
            <person name="Burland V."/>
            <person name="Mau B."/>
            <person name="Petrosino J.F."/>
            <person name="Qin X."/>
            <person name="Muzny D.M."/>
            <person name="Ayele M."/>
            <person name="Gibbs R.A."/>
            <person name="Csorgo B."/>
            <person name="Posfai G."/>
            <person name="Weinstock G.M."/>
            <person name="Blattner F.R."/>
        </authorList>
    </citation>
    <scope>NUCLEOTIDE SEQUENCE [LARGE SCALE GENOMIC DNA]</scope>
    <source>
        <strain>K12 / DH10B</strain>
    </source>
</reference>
<dbReference type="EC" id="7.6.2.13" evidence="1"/>
<dbReference type="EMBL" id="CP000948">
    <property type="protein sequence ID" value="ACB02723.1"/>
    <property type="molecule type" value="Genomic_DNA"/>
</dbReference>
<dbReference type="RefSeq" id="WP_001194860.1">
    <property type="nucleotide sequence ID" value="NC_010473.1"/>
</dbReference>
<dbReference type="SMR" id="B1XEA1"/>
<dbReference type="KEGG" id="ecd:ECDH10B_1644"/>
<dbReference type="HOGENOM" id="CLU_000604_92_3_6"/>
<dbReference type="GO" id="GO:0005886">
    <property type="term" value="C:plasma membrane"/>
    <property type="evidence" value="ECO:0007669"/>
    <property type="project" value="UniProtKB-SubCell"/>
</dbReference>
<dbReference type="GO" id="GO:0005524">
    <property type="term" value="F:ATP binding"/>
    <property type="evidence" value="ECO:0007669"/>
    <property type="project" value="UniProtKB-KW"/>
</dbReference>
<dbReference type="GO" id="GO:0016887">
    <property type="term" value="F:ATP hydrolysis activity"/>
    <property type="evidence" value="ECO:0007669"/>
    <property type="project" value="InterPro"/>
</dbReference>
<dbReference type="CDD" id="cd03216">
    <property type="entry name" value="ABC_Carb_Monos_I"/>
    <property type="match status" value="1"/>
</dbReference>
<dbReference type="CDD" id="cd03215">
    <property type="entry name" value="ABC_Carb_Monos_II"/>
    <property type="match status" value="1"/>
</dbReference>
<dbReference type="Gene3D" id="3.40.50.300">
    <property type="entry name" value="P-loop containing nucleotide triphosphate hydrolases"/>
    <property type="match status" value="2"/>
</dbReference>
<dbReference type="InterPro" id="IPR003593">
    <property type="entry name" value="AAA+_ATPase"/>
</dbReference>
<dbReference type="InterPro" id="IPR050107">
    <property type="entry name" value="ABC_carbohydrate_import_ATPase"/>
</dbReference>
<dbReference type="InterPro" id="IPR003439">
    <property type="entry name" value="ABC_transporter-like_ATP-bd"/>
</dbReference>
<dbReference type="InterPro" id="IPR017871">
    <property type="entry name" value="ABC_transporter-like_CS"/>
</dbReference>
<dbReference type="InterPro" id="IPR027417">
    <property type="entry name" value="P-loop_NTPase"/>
</dbReference>
<dbReference type="NCBIfam" id="NF011967">
    <property type="entry name" value="PRK15439.1"/>
    <property type="match status" value="1"/>
</dbReference>
<dbReference type="PANTHER" id="PTHR43790:SF2">
    <property type="entry name" value="AUTOINDUCER 2 IMPORT ATP-BINDING PROTEIN LSRA"/>
    <property type="match status" value="1"/>
</dbReference>
<dbReference type="PANTHER" id="PTHR43790">
    <property type="entry name" value="CARBOHYDRATE TRANSPORT ATP-BINDING PROTEIN MG119-RELATED"/>
    <property type="match status" value="1"/>
</dbReference>
<dbReference type="Pfam" id="PF00005">
    <property type="entry name" value="ABC_tran"/>
    <property type="match status" value="2"/>
</dbReference>
<dbReference type="SMART" id="SM00382">
    <property type="entry name" value="AAA"/>
    <property type="match status" value="2"/>
</dbReference>
<dbReference type="SUPFAM" id="SSF52540">
    <property type="entry name" value="P-loop containing nucleoside triphosphate hydrolases"/>
    <property type="match status" value="2"/>
</dbReference>
<dbReference type="PROSITE" id="PS00211">
    <property type="entry name" value="ABC_TRANSPORTER_1"/>
    <property type="match status" value="1"/>
</dbReference>
<dbReference type="PROSITE" id="PS50893">
    <property type="entry name" value="ABC_TRANSPORTER_2"/>
    <property type="match status" value="2"/>
</dbReference>
<feature type="chain" id="PRO_0000351291" description="Autoinducer 2 import ATP-binding protein LsrA">
    <location>
        <begin position="1"/>
        <end position="511"/>
    </location>
</feature>
<feature type="domain" description="ABC transporter 1" evidence="2">
    <location>
        <begin position="12"/>
        <end position="240"/>
    </location>
</feature>
<feature type="domain" description="ABC transporter 2" evidence="2">
    <location>
        <begin position="240"/>
        <end position="503"/>
    </location>
</feature>
<feature type="binding site" evidence="2">
    <location>
        <begin position="44"/>
        <end position="51"/>
    </location>
    <ligand>
        <name>ATP</name>
        <dbReference type="ChEBI" id="CHEBI:30616"/>
    </ligand>
</feature>
<proteinExistence type="inferred from homology"/>
<keyword id="KW-0067">ATP-binding</keyword>
<keyword id="KW-0997">Cell inner membrane</keyword>
<keyword id="KW-1003">Cell membrane</keyword>
<keyword id="KW-0472">Membrane</keyword>
<keyword id="KW-0547">Nucleotide-binding</keyword>
<keyword id="KW-0677">Repeat</keyword>
<keyword id="KW-1278">Translocase</keyword>
<keyword id="KW-0813">Transport</keyword>
<organism>
    <name type="scientific">Escherichia coli (strain K12 / DH10B)</name>
    <dbReference type="NCBI Taxonomy" id="316385"/>
    <lineage>
        <taxon>Bacteria</taxon>
        <taxon>Pseudomonadati</taxon>
        <taxon>Pseudomonadota</taxon>
        <taxon>Gammaproteobacteria</taxon>
        <taxon>Enterobacterales</taxon>
        <taxon>Enterobacteriaceae</taxon>
        <taxon>Escherichia</taxon>
    </lineage>
</organism>
<gene>
    <name type="primary">lsrA</name>
    <name type="ordered locus">ECDH10B_1644</name>
</gene>
<name>LSRA_ECODH</name>
<accession>B1XEA1</accession>
<sequence>MQTSDTRALPLLCARSVYKQYSGVNVLKGIDFTLHQGEVHALLGGNGAGKSTLMKIIAGITPADSGTLEIEGNNYVRLTPVHAHQLGIYLVPQEPLLFPSLSIKENILFGLAKKQLSMQKMKNLLAALGCQFDLHSLAGSLDVADRQMVEILRGLMRDSRILILDEPTASLTPAETERLFSRLQELLATGVGIVFISHKLPEIRQIADRISVMRDGTIALSGKTSELSTDDIIQAITPAVREKSLSASQKLWLELPGNRPQHAAGTPVLTLENLTGEGFRNVSLTLNAGEILGLAGLVGAGRTELAETLYGLRTLRGGRIMLNGKEINKLSTGERLLRGLVYLPEDRQSSGLNLDASLAWNVCALTHNLRGFWAKTAKDNATLERYRRALNIKFNQPEQAARTLSGGNQQKILIAKCLEASPQVLIVDEPTRGVDVSARNDIYQLLRSIAAQNVAVLLISSDLEEIELMADRVYVMHQGEITHSALTERDINVETIMRVAFGDSQRQEASC</sequence>
<protein>
    <recommendedName>
        <fullName evidence="1">Autoinducer 2 import ATP-binding protein LsrA</fullName>
        <shortName evidence="1">AI-2 import ATP-binding protein LsrA</shortName>
        <ecNumber evidence="1">7.6.2.13</ecNumber>
    </recommendedName>
</protein>
<comment type="function">
    <text evidence="1">Part of the ABC transporter complex LsrABCD involved in autoinducer 2 (AI-2) import. Responsible for energy coupling to the transport system.</text>
</comment>
<comment type="catalytic activity">
    <reaction evidence="1">
        <text>ATP + H2O + (2R,4S)-2-methyl-2,3,3,4-tetrahydroxytetrahydrofuran-[AI-2-binding protein]Side 1 = ADP + phosphate + (2R,4S)-2-methyl-2,3,3,4-tetrahydroxytetrahydrofuranSide 2 + [AI-2-binding protein]Side 1.</text>
        <dbReference type="EC" id="7.6.2.13"/>
    </reaction>
</comment>
<comment type="subunit">
    <text evidence="1">The complex is composed of two ATP-binding proteins (LsrA), two transmembrane proteins (LsrC and LsrD) and a solute-binding protein (LsrB).</text>
</comment>
<comment type="subcellular location">
    <subcellularLocation>
        <location evidence="1">Cell inner membrane</location>
        <topology evidence="1">Peripheral membrane protein</topology>
    </subcellularLocation>
</comment>
<comment type="similarity">
    <text evidence="3">Belongs to the ABC transporter superfamily. AI-2 autoinducer porter (TC 3.A.1.2.8) family.</text>
</comment>